<keyword id="KW-0963">Cytoplasm</keyword>
<keyword id="KW-0342">GTP-binding</keyword>
<keyword id="KW-0378">Hydrolase</keyword>
<keyword id="KW-0479">Metal-binding</keyword>
<keyword id="KW-0547">Nucleotide-binding</keyword>
<keyword id="KW-0690">Ribosome biogenesis</keyword>
<keyword id="KW-0694">RNA-binding</keyword>
<keyword id="KW-0699">rRNA-binding</keyword>
<keyword id="KW-0862">Zinc</keyword>
<organism>
    <name type="scientific">Salmonella agona (strain SL483)</name>
    <dbReference type="NCBI Taxonomy" id="454166"/>
    <lineage>
        <taxon>Bacteria</taxon>
        <taxon>Pseudomonadati</taxon>
        <taxon>Pseudomonadota</taxon>
        <taxon>Gammaproteobacteria</taxon>
        <taxon>Enterobacterales</taxon>
        <taxon>Enterobacteriaceae</taxon>
        <taxon>Salmonella</taxon>
    </lineage>
</organism>
<protein>
    <recommendedName>
        <fullName evidence="1">Small ribosomal subunit biogenesis GTPase RsgA</fullName>
        <ecNumber evidence="1">3.6.1.-</ecNumber>
    </recommendedName>
</protein>
<sequence length="350" mass="38948">MSKNKLSKGQQRRVNANHQRRLKTSAEKADYDDNLFGEPAEGIVISRFGMHADVESADGEVHRCNIRRTIRSLVTGDRVVWRPGKAAAEGVNVKGIVEAVHERTSVLTRPDFYDGVKPIAANIDQIVIVSAILPELSLNIIDRYLVGCETLQVEPLIVLNKIDLLDDEGMDFVNEQMDIYRNIGYRVLMVSSHTQDGLKPLEEALTGRISIFAGQSGVGKSSLLNALLGLQNEILTNDVSNVSGLGQHTTTAARLYHFPHGGDVIDSPGVREFGLWHLEPEQITQGFVEFHDYLGHCKYRDCKHDADPGCAIREAVENGAIAETRFENYHRILESMAQVKTRKNFSDTDD</sequence>
<comment type="function">
    <text evidence="1">One of several proteins that assist in the late maturation steps of the functional core of the 30S ribosomal subunit. Helps release RbfA from mature subunits. May play a role in the assembly of ribosomal proteins into the subunit. Circularly permuted GTPase that catalyzes slow GTP hydrolysis, GTPase activity is stimulated by the 30S ribosomal subunit.</text>
</comment>
<comment type="cofactor">
    <cofactor evidence="1">
        <name>Zn(2+)</name>
        <dbReference type="ChEBI" id="CHEBI:29105"/>
    </cofactor>
    <text evidence="1">Binds 1 zinc ion per subunit.</text>
</comment>
<comment type="subunit">
    <text evidence="1">Monomer. Associates with 30S ribosomal subunit, binds 16S rRNA.</text>
</comment>
<comment type="subcellular location">
    <subcellularLocation>
        <location evidence="1">Cytoplasm</location>
    </subcellularLocation>
</comment>
<comment type="similarity">
    <text evidence="1">Belongs to the TRAFAC class YlqF/YawG GTPase family. RsgA subfamily.</text>
</comment>
<gene>
    <name evidence="1" type="primary">rsgA</name>
    <name type="ordered locus">SeAg_B4627</name>
</gene>
<evidence type="ECO:0000255" key="1">
    <source>
        <dbReference type="HAMAP-Rule" id="MF_01820"/>
    </source>
</evidence>
<evidence type="ECO:0000255" key="2">
    <source>
        <dbReference type="PROSITE-ProRule" id="PRU01058"/>
    </source>
</evidence>
<evidence type="ECO:0000256" key="3">
    <source>
        <dbReference type="SAM" id="MobiDB-lite"/>
    </source>
</evidence>
<accession>B5F378</accession>
<proteinExistence type="inferred from homology"/>
<dbReference type="EC" id="3.6.1.-" evidence="1"/>
<dbReference type="EMBL" id="CP001138">
    <property type="protein sequence ID" value="ACH50744.1"/>
    <property type="molecule type" value="Genomic_DNA"/>
</dbReference>
<dbReference type="RefSeq" id="WP_000041945.1">
    <property type="nucleotide sequence ID" value="NC_011149.1"/>
</dbReference>
<dbReference type="SMR" id="B5F378"/>
<dbReference type="KEGG" id="sea:SeAg_B4627"/>
<dbReference type="HOGENOM" id="CLU_033617_2_0_6"/>
<dbReference type="Proteomes" id="UP000008819">
    <property type="component" value="Chromosome"/>
</dbReference>
<dbReference type="GO" id="GO:0005737">
    <property type="term" value="C:cytoplasm"/>
    <property type="evidence" value="ECO:0007669"/>
    <property type="project" value="UniProtKB-SubCell"/>
</dbReference>
<dbReference type="GO" id="GO:0005525">
    <property type="term" value="F:GTP binding"/>
    <property type="evidence" value="ECO:0007669"/>
    <property type="project" value="UniProtKB-UniRule"/>
</dbReference>
<dbReference type="GO" id="GO:0003924">
    <property type="term" value="F:GTPase activity"/>
    <property type="evidence" value="ECO:0007669"/>
    <property type="project" value="UniProtKB-UniRule"/>
</dbReference>
<dbReference type="GO" id="GO:0046872">
    <property type="term" value="F:metal ion binding"/>
    <property type="evidence" value="ECO:0007669"/>
    <property type="project" value="UniProtKB-KW"/>
</dbReference>
<dbReference type="GO" id="GO:0019843">
    <property type="term" value="F:rRNA binding"/>
    <property type="evidence" value="ECO:0007669"/>
    <property type="project" value="UniProtKB-KW"/>
</dbReference>
<dbReference type="GO" id="GO:0042274">
    <property type="term" value="P:ribosomal small subunit biogenesis"/>
    <property type="evidence" value="ECO:0007669"/>
    <property type="project" value="UniProtKB-UniRule"/>
</dbReference>
<dbReference type="CDD" id="cd01854">
    <property type="entry name" value="YjeQ_EngC"/>
    <property type="match status" value="1"/>
</dbReference>
<dbReference type="FunFam" id="1.10.40.50:FF:000001">
    <property type="entry name" value="Small ribosomal subunit biogenesis GTPase RsgA"/>
    <property type="match status" value="1"/>
</dbReference>
<dbReference type="FunFam" id="3.40.50.300:FF:000389">
    <property type="entry name" value="Small ribosomal subunit biogenesis GTPase RsgA"/>
    <property type="match status" value="1"/>
</dbReference>
<dbReference type="Gene3D" id="2.40.50.140">
    <property type="entry name" value="Nucleic acid-binding proteins"/>
    <property type="match status" value="1"/>
</dbReference>
<dbReference type="Gene3D" id="3.40.50.300">
    <property type="entry name" value="P-loop containing nucleotide triphosphate hydrolases"/>
    <property type="match status" value="1"/>
</dbReference>
<dbReference type="Gene3D" id="1.10.40.50">
    <property type="entry name" value="Probable gtpase engc, domain 3"/>
    <property type="match status" value="1"/>
</dbReference>
<dbReference type="HAMAP" id="MF_01820">
    <property type="entry name" value="GTPase_RsgA"/>
    <property type="match status" value="1"/>
</dbReference>
<dbReference type="InterPro" id="IPR030378">
    <property type="entry name" value="G_CP_dom"/>
</dbReference>
<dbReference type="InterPro" id="IPR012340">
    <property type="entry name" value="NA-bd_OB-fold"/>
</dbReference>
<dbReference type="InterPro" id="IPR027417">
    <property type="entry name" value="P-loop_NTPase"/>
</dbReference>
<dbReference type="InterPro" id="IPR004881">
    <property type="entry name" value="Ribosome_biogen_GTPase_RsgA"/>
</dbReference>
<dbReference type="InterPro" id="IPR010914">
    <property type="entry name" value="RsgA_GTPase_dom"/>
</dbReference>
<dbReference type="NCBIfam" id="NF008931">
    <property type="entry name" value="PRK12288.1"/>
    <property type="match status" value="1"/>
</dbReference>
<dbReference type="NCBIfam" id="TIGR00157">
    <property type="entry name" value="ribosome small subunit-dependent GTPase A"/>
    <property type="match status" value="1"/>
</dbReference>
<dbReference type="PANTHER" id="PTHR32120">
    <property type="entry name" value="SMALL RIBOSOMAL SUBUNIT BIOGENESIS GTPASE RSGA"/>
    <property type="match status" value="1"/>
</dbReference>
<dbReference type="PANTHER" id="PTHR32120:SF11">
    <property type="entry name" value="SMALL RIBOSOMAL SUBUNIT BIOGENESIS GTPASE RSGA 1, MITOCHONDRIAL-RELATED"/>
    <property type="match status" value="1"/>
</dbReference>
<dbReference type="Pfam" id="PF03193">
    <property type="entry name" value="RsgA_GTPase"/>
    <property type="match status" value="1"/>
</dbReference>
<dbReference type="SUPFAM" id="SSF52540">
    <property type="entry name" value="P-loop containing nucleoside triphosphate hydrolases"/>
    <property type="match status" value="1"/>
</dbReference>
<dbReference type="PROSITE" id="PS50936">
    <property type="entry name" value="ENGC_GTPASE"/>
    <property type="match status" value="1"/>
</dbReference>
<dbReference type="PROSITE" id="PS51721">
    <property type="entry name" value="G_CP"/>
    <property type="match status" value="1"/>
</dbReference>
<name>RSGA_SALA4</name>
<reference key="1">
    <citation type="journal article" date="2011" name="J. Bacteriol.">
        <title>Comparative genomics of 28 Salmonella enterica isolates: evidence for CRISPR-mediated adaptive sublineage evolution.</title>
        <authorList>
            <person name="Fricke W.F."/>
            <person name="Mammel M.K."/>
            <person name="McDermott P.F."/>
            <person name="Tartera C."/>
            <person name="White D.G."/>
            <person name="Leclerc J.E."/>
            <person name="Ravel J."/>
            <person name="Cebula T.A."/>
        </authorList>
    </citation>
    <scope>NUCLEOTIDE SEQUENCE [LARGE SCALE GENOMIC DNA]</scope>
    <source>
        <strain>SL483</strain>
    </source>
</reference>
<feature type="chain" id="PRO_1000188132" description="Small ribosomal subunit biogenesis GTPase RsgA">
    <location>
        <begin position="1"/>
        <end position="350"/>
    </location>
</feature>
<feature type="domain" description="CP-type G" evidence="2">
    <location>
        <begin position="104"/>
        <end position="273"/>
    </location>
</feature>
<feature type="region of interest" description="Disordered" evidence="3">
    <location>
        <begin position="1"/>
        <end position="27"/>
    </location>
</feature>
<feature type="compositionally biased region" description="Polar residues" evidence="3">
    <location>
        <begin position="1"/>
        <end position="17"/>
    </location>
</feature>
<feature type="binding site" evidence="1">
    <location>
        <begin position="160"/>
        <end position="163"/>
    </location>
    <ligand>
        <name>GTP</name>
        <dbReference type="ChEBI" id="CHEBI:37565"/>
    </ligand>
</feature>
<feature type="binding site" evidence="1">
    <location>
        <begin position="214"/>
        <end position="222"/>
    </location>
    <ligand>
        <name>GTP</name>
        <dbReference type="ChEBI" id="CHEBI:37565"/>
    </ligand>
</feature>
<feature type="binding site" evidence="1">
    <location>
        <position position="297"/>
    </location>
    <ligand>
        <name>Zn(2+)</name>
        <dbReference type="ChEBI" id="CHEBI:29105"/>
    </ligand>
</feature>
<feature type="binding site" evidence="1">
    <location>
        <position position="302"/>
    </location>
    <ligand>
        <name>Zn(2+)</name>
        <dbReference type="ChEBI" id="CHEBI:29105"/>
    </ligand>
</feature>
<feature type="binding site" evidence="1">
    <location>
        <position position="304"/>
    </location>
    <ligand>
        <name>Zn(2+)</name>
        <dbReference type="ChEBI" id="CHEBI:29105"/>
    </ligand>
</feature>
<feature type="binding site" evidence="1">
    <location>
        <position position="310"/>
    </location>
    <ligand>
        <name>Zn(2+)</name>
        <dbReference type="ChEBI" id="CHEBI:29105"/>
    </ligand>
</feature>